<accession>B0K9G3</accession>
<feature type="chain" id="PRO_1000130812" description="Anti-sigma F factor">
    <location>
        <begin position="1"/>
        <end position="143"/>
    </location>
</feature>
<comment type="function">
    <text evidence="1">Binds to sigma F and blocks its ability to form an RNA polymerase holoenzyme (E-sigma F). Phosphorylates SpoIIAA on a serine residue. This phosphorylation may enable SpoIIAA to act as an anti-anti-sigma factor that counteracts SpoIIAB and thus releases sigma F from inhibition.</text>
</comment>
<comment type="catalytic activity">
    <reaction evidence="1">
        <text>L-seryl-[protein] + ATP = O-phospho-L-seryl-[protein] + ADP + H(+)</text>
        <dbReference type="Rhea" id="RHEA:17989"/>
        <dbReference type="Rhea" id="RHEA-COMP:9863"/>
        <dbReference type="Rhea" id="RHEA-COMP:11604"/>
        <dbReference type="ChEBI" id="CHEBI:15378"/>
        <dbReference type="ChEBI" id="CHEBI:29999"/>
        <dbReference type="ChEBI" id="CHEBI:30616"/>
        <dbReference type="ChEBI" id="CHEBI:83421"/>
        <dbReference type="ChEBI" id="CHEBI:456216"/>
        <dbReference type="EC" id="2.7.11.1"/>
    </reaction>
</comment>
<comment type="catalytic activity">
    <reaction evidence="1">
        <text>L-threonyl-[protein] + ATP = O-phospho-L-threonyl-[protein] + ADP + H(+)</text>
        <dbReference type="Rhea" id="RHEA:46608"/>
        <dbReference type="Rhea" id="RHEA-COMP:11060"/>
        <dbReference type="Rhea" id="RHEA-COMP:11605"/>
        <dbReference type="ChEBI" id="CHEBI:15378"/>
        <dbReference type="ChEBI" id="CHEBI:30013"/>
        <dbReference type="ChEBI" id="CHEBI:30616"/>
        <dbReference type="ChEBI" id="CHEBI:61977"/>
        <dbReference type="ChEBI" id="CHEBI:456216"/>
        <dbReference type="EC" id="2.7.11.1"/>
    </reaction>
</comment>
<comment type="similarity">
    <text evidence="1">Belongs to the anti-sigma-factor family.</text>
</comment>
<keyword id="KW-0067">ATP-binding</keyword>
<keyword id="KW-0418">Kinase</keyword>
<keyword id="KW-0547">Nucleotide-binding</keyword>
<keyword id="KW-1185">Reference proteome</keyword>
<keyword id="KW-0723">Serine/threonine-protein kinase</keyword>
<keyword id="KW-0749">Sporulation</keyword>
<keyword id="KW-0808">Transferase</keyword>
<organism>
    <name type="scientific">Thermoanaerobacter pseudethanolicus (strain ATCC 33223 / 39E)</name>
    <name type="common">Clostridium thermohydrosulfuricum</name>
    <dbReference type="NCBI Taxonomy" id="340099"/>
    <lineage>
        <taxon>Bacteria</taxon>
        <taxon>Bacillati</taxon>
        <taxon>Bacillota</taxon>
        <taxon>Clostridia</taxon>
        <taxon>Thermoanaerobacterales</taxon>
        <taxon>Thermoanaerobacteraceae</taxon>
        <taxon>Thermoanaerobacter</taxon>
    </lineage>
</organism>
<dbReference type="EC" id="2.7.11.1" evidence="1"/>
<dbReference type="EMBL" id="CP000924">
    <property type="protein sequence ID" value="ABY94776.1"/>
    <property type="molecule type" value="Genomic_DNA"/>
</dbReference>
<dbReference type="RefSeq" id="WP_003868002.1">
    <property type="nucleotide sequence ID" value="NC_010321.1"/>
</dbReference>
<dbReference type="SMR" id="B0K9G3"/>
<dbReference type="STRING" id="340099.Teth39_1121"/>
<dbReference type="KEGG" id="tpd:Teth39_1121"/>
<dbReference type="eggNOG" id="COG2172">
    <property type="taxonomic scope" value="Bacteria"/>
</dbReference>
<dbReference type="HOGENOM" id="CLU_090336_11_0_9"/>
<dbReference type="Proteomes" id="UP000002156">
    <property type="component" value="Chromosome"/>
</dbReference>
<dbReference type="GO" id="GO:0005524">
    <property type="term" value="F:ATP binding"/>
    <property type="evidence" value="ECO:0007669"/>
    <property type="project" value="UniProtKB-KW"/>
</dbReference>
<dbReference type="GO" id="GO:0106310">
    <property type="term" value="F:protein serine kinase activity"/>
    <property type="evidence" value="ECO:0007669"/>
    <property type="project" value="RHEA"/>
</dbReference>
<dbReference type="GO" id="GO:0004674">
    <property type="term" value="F:protein serine/threonine kinase activity"/>
    <property type="evidence" value="ECO:0007669"/>
    <property type="project" value="UniProtKB-KW"/>
</dbReference>
<dbReference type="GO" id="GO:0016989">
    <property type="term" value="F:sigma factor antagonist activity"/>
    <property type="evidence" value="ECO:0007669"/>
    <property type="project" value="InterPro"/>
</dbReference>
<dbReference type="GO" id="GO:0030436">
    <property type="term" value="P:asexual sporulation"/>
    <property type="evidence" value="ECO:0007669"/>
    <property type="project" value="UniProtKB-UniRule"/>
</dbReference>
<dbReference type="GO" id="GO:0042174">
    <property type="term" value="P:negative regulation of sporulation resulting in formation of a cellular spore"/>
    <property type="evidence" value="ECO:0007669"/>
    <property type="project" value="InterPro"/>
</dbReference>
<dbReference type="GO" id="GO:0030435">
    <property type="term" value="P:sporulation resulting in formation of a cellular spore"/>
    <property type="evidence" value="ECO:0007669"/>
    <property type="project" value="UniProtKB-KW"/>
</dbReference>
<dbReference type="Gene3D" id="3.30.565.10">
    <property type="entry name" value="Histidine kinase-like ATPase, C-terminal domain"/>
    <property type="match status" value="1"/>
</dbReference>
<dbReference type="HAMAP" id="MF_00637">
    <property type="entry name" value="Anti_sigma_F"/>
    <property type="match status" value="1"/>
</dbReference>
<dbReference type="InterPro" id="IPR050267">
    <property type="entry name" value="Anti-sigma-factor_SerPK"/>
</dbReference>
<dbReference type="InterPro" id="IPR010194">
    <property type="entry name" value="Anti-sigma_F"/>
</dbReference>
<dbReference type="InterPro" id="IPR036890">
    <property type="entry name" value="HATPase_C_sf"/>
</dbReference>
<dbReference type="NCBIfam" id="TIGR01925">
    <property type="entry name" value="spIIAB"/>
    <property type="match status" value="1"/>
</dbReference>
<dbReference type="PANTHER" id="PTHR35526:SF3">
    <property type="entry name" value="ANTI-SIGMA-F FACTOR RSBW"/>
    <property type="match status" value="1"/>
</dbReference>
<dbReference type="PANTHER" id="PTHR35526">
    <property type="entry name" value="ANTI-SIGMA-F FACTOR RSBW-RELATED"/>
    <property type="match status" value="1"/>
</dbReference>
<dbReference type="Pfam" id="PF13581">
    <property type="entry name" value="HATPase_c_2"/>
    <property type="match status" value="1"/>
</dbReference>
<dbReference type="SMART" id="SM00387">
    <property type="entry name" value="HATPase_c"/>
    <property type="match status" value="1"/>
</dbReference>
<dbReference type="SUPFAM" id="SSF55874">
    <property type="entry name" value="ATPase domain of HSP90 chaperone/DNA topoisomerase II/histidine kinase"/>
    <property type="match status" value="1"/>
</dbReference>
<evidence type="ECO:0000255" key="1">
    <source>
        <dbReference type="HAMAP-Rule" id="MF_00637"/>
    </source>
</evidence>
<name>SP2AB_THEP3</name>
<reference key="1">
    <citation type="submission" date="2008-01" db="EMBL/GenBank/DDBJ databases">
        <title>Complete sequence of Thermoanaerobacter pseudethanolicus 39E.</title>
        <authorList>
            <person name="Copeland A."/>
            <person name="Lucas S."/>
            <person name="Lapidus A."/>
            <person name="Barry K."/>
            <person name="Glavina del Rio T."/>
            <person name="Dalin E."/>
            <person name="Tice H."/>
            <person name="Pitluck S."/>
            <person name="Bruce D."/>
            <person name="Goodwin L."/>
            <person name="Saunders E."/>
            <person name="Brettin T."/>
            <person name="Detter J.C."/>
            <person name="Han C."/>
            <person name="Schmutz J."/>
            <person name="Larimer F."/>
            <person name="Land M."/>
            <person name="Hauser L."/>
            <person name="Kyrpides N."/>
            <person name="Lykidis A."/>
            <person name="Hemme C."/>
            <person name="Fields M.W."/>
            <person name="He Z."/>
            <person name="Zhou J."/>
            <person name="Richardson P."/>
        </authorList>
    </citation>
    <scope>NUCLEOTIDE SEQUENCE [LARGE SCALE GENOMIC DNA]</scope>
    <source>
        <strain>ATCC 33223 / DSM 2355 / 39E</strain>
    </source>
</reference>
<proteinExistence type="inferred from homology"/>
<sequence length="143" mass="15881">MEYTNMMELNFLSKSQNESFARTVVAAFAAQLDPTIEEIADIKTAVSEAVTNCIIHGYENKIGIITIKAFISGNKITIEVIDEGKGIEDIEKAMQPLFTTRLEEERAGMGFTVMQTFMDELEVESTPGKGTLVRMTKYIGSDK</sequence>
<protein>
    <recommendedName>
        <fullName evidence="1">Anti-sigma F factor</fullName>
        <ecNumber evidence="1">2.7.11.1</ecNumber>
    </recommendedName>
    <alternativeName>
        <fullName evidence="1">Stage II sporulation protein AB</fullName>
    </alternativeName>
</protein>
<gene>
    <name evidence="1" type="primary">spoIIAB</name>
    <name type="ordered locus">Teth39_1121</name>
</gene>